<protein>
    <recommendedName>
        <fullName evidence="1">Small ribosomal subunit protein uS3</fullName>
    </recommendedName>
    <alternativeName>
        <fullName evidence="2">30S ribosomal protein S3</fullName>
    </alternativeName>
</protein>
<feature type="chain" id="PRO_1000165488" description="Small ribosomal subunit protein uS3">
    <location>
        <begin position="1"/>
        <end position="223"/>
    </location>
</feature>
<feature type="domain" description="KH type-2" evidence="1">
    <location>
        <begin position="39"/>
        <end position="108"/>
    </location>
</feature>
<evidence type="ECO:0000255" key="1">
    <source>
        <dbReference type="HAMAP-Rule" id="MF_01309"/>
    </source>
</evidence>
<evidence type="ECO:0000305" key="2"/>
<sequence length="223" mass="24953">MGQKVHPHGLRVGVIKEWDAKWYADKKNFADNLVEDHKIRNFVKKNSYAAGVSRIEIERAAKRIKLNIYTAKPGMIIGKGGQGIESLKNKLQKIVSNKNILINIVEVKRPEADAQLIAENIAQQLEKRIAFRRAMKQSIQRAMKSGVKGIKTACSGRLAGAEIARTEHYNEGTIPLQTLRADIDYGFAEADTTYGKIGVKVWVYKGEVLPARKNINEKEEANA</sequence>
<name>RS3_CLOBJ</name>
<comment type="function">
    <text evidence="1">Binds the lower part of the 30S subunit head. Binds mRNA in the 70S ribosome, positioning it for translation.</text>
</comment>
<comment type="subunit">
    <text evidence="1">Part of the 30S ribosomal subunit. Forms a tight complex with proteins S10 and S14.</text>
</comment>
<comment type="similarity">
    <text evidence="1">Belongs to the universal ribosomal protein uS3 family.</text>
</comment>
<dbReference type="EMBL" id="CP001581">
    <property type="protein sequence ID" value="ACO84821.1"/>
    <property type="molecule type" value="Genomic_DNA"/>
</dbReference>
<dbReference type="RefSeq" id="WP_012344185.1">
    <property type="nucleotide sequence ID" value="NC_012563.1"/>
</dbReference>
<dbReference type="SMR" id="C1FMU5"/>
<dbReference type="KEGG" id="cby:CLM_3942"/>
<dbReference type="eggNOG" id="COG0092">
    <property type="taxonomic scope" value="Bacteria"/>
</dbReference>
<dbReference type="HOGENOM" id="CLU_058591_0_2_9"/>
<dbReference type="Proteomes" id="UP000001374">
    <property type="component" value="Chromosome"/>
</dbReference>
<dbReference type="GO" id="GO:0022627">
    <property type="term" value="C:cytosolic small ribosomal subunit"/>
    <property type="evidence" value="ECO:0007669"/>
    <property type="project" value="TreeGrafter"/>
</dbReference>
<dbReference type="GO" id="GO:0003729">
    <property type="term" value="F:mRNA binding"/>
    <property type="evidence" value="ECO:0007669"/>
    <property type="project" value="UniProtKB-UniRule"/>
</dbReference>
<dbReference type="GO" id="GO:0019843">
    <property type="term" value="F:rRNA binding"/>
    <property type="evidence" value="ECO:0007669"/>
    <property type="project" value="UniProtKB-UniRule"/>
</dbReference>
<dbReference type="GO" id="GO:0003735">
    <property type="term" value="F:structural constituent of ribosome"/>
    <property type="evidence" value="ECO:0007669"/>
    <property type="project" value="InterPro"/>
</dbReference>
<dbReference type="GO" id="GO:0006412">
    <property type="term" value="P:translation"/>
    <property type="evidence" value="ECO:0007669"/>
    <property type="project" value="UniProtKB-UniRule"/>
</dbReference>
<dbReference type="CDD" id="cd02412">
    <property type="entry name" value="KH-II_30S_S3"/>
    <property type="match status" value="1"/>
</dbReference>
<dbReference type="FunFam" id="3.30.1140.32:FF:000002">
    <property type="entry name" value="30S ribosomal protein S3"/>
    <property type="match status" value="1"/>
</dbReference>
<dbReference type="FunFam" id="3.30.300.20:FF:000001">
    <property type="entry name" value="30S ribosomal protein S3"/>
    <property type="match status" value="1"/>
</dbReference>
<dbReference type="Gene3D" id="3.30.300.20">
    <property type="match status" value="1"/>
</dbReference>
<dbReference type="Gene3D" id="3.30.1140.32">
    <property type="entry name" value="Ribosomal protein S3, C-terminal domain"/>
    <property type="match status" value="1"/>
</dbReference>
<dbReference type="HAMAP" id="MF_01309_B">
    <property type="entry name" value="Ribosomal_uS3_B"/>
    <property type="match status" value="1"/>
</dbReference>
<dbReference type="InterPro" id="IPR004087">
    <property type="entry name" value="KH_dom"/>
</dbReference>
<dbReference type="InterPro" id="IPR015946">
    <property type="entry name" value="KH_dom-like_a/b"/>
</dbReference>
<dbReference type="InterPro" id="IPR004044">
    <property type="entry name" value="KH_dom_type_2"/>
</dbReference>
<dbReference type="InterPro" id="IPR009019">
    <property type="entry name" value="KH_sf_prok-type"/>
</dbReference>
<dbReference type="InterPro" id="IPR036419">
    <property type="entry name" value="Ribosomal_S3_C_sf"/>
</dbReference>
<dbReference type="InterPro" id="IPR005704">
    <property type="entry name" value="Ribosomal_uS3_bac-typ"/>
</dbReference>
<dbReference type="InterPro" id="IPR001351">
    <property type="entry name" value="Ribosomal_uS3_C"/>
</dbReference>
<dbReference type="InterPro" id="IPR018280">
    <property type="entry name" value="Ribosomal_uS3_CS"/>
</dbReference>
<dbReference type="NCBIfam" id="TIGR01009">
    <property type="entry name" value="rpsC_bact"/>
    <property type="match status" value="1"/>
</dbReference>
<dbReference type="PANTHER" id="PTHR11760">
    <property type="entry name" value="30S/40S RIBOSOMAL PROTEIN S3"/>
    <property type="match status" value="1"/>
</dbReference>
<dbReference type="PANTHER" id="PTHR11760:SF19">
    <property type="entry name" value="SMALL RIBOSOMAL SUBUNIT PROTEIN US3C"/>
    <property type="match status" value="1"/>
</dbReference>
<dbReference type="Pfam" id="PF07650">
    <property type="entry name" value="KH_2"/>
    <property type="match status" value="1"/>
</dbReference>
<dbReference type="Pfam" id="PF00189">
    <property type="entry name" value="Ribosomal_S3_C"/>
    <property type="match status" value="1"/>
</dbReference>
<dbReference type="SMART" id="SM00322">
    <property type="entry name" value="KH"/>
    <property type="match status" value="1"/>
</dbReference>
<dbReference type="SUPFAM" id="SSF54814">
    <property type="entry name" value="Prokaryotic type KH domain (KH-domain type II)"/>
    <property type="match status" value="1"/>
</dbReference>
<dbReference type="SUPFAM" id="SSF54821">
    <property type="entry name" value="Ribosomal protein S3 C-terminal domain"/>
    <property type="match status" value="1"/>
</dbReference>
<dbReference type="PROSITE" id="PS50823">
    <property type="entry name" value="KH_TYPE_2"/>
    <property type="match status" value="1"/>
</dbReference>
<dbReference type="PROSITE" id="PS00548">
    <property type="entry name" value="RIBOSOMAL_S3"/>
    <property type="match status" value="1"/>
</dbReference>
<organism>
    <name type="scientific">Clostridium botulinum (strain Kyoto / Type A2)</name>
    <dbReference type="NCBI Taxonomy" id="536232"/>
    <lineage>
        <taxon>Bacteria</taxon>
        <taxon>Bacillati</taxon>
        <taxon>Bacillota</taxon>
        <taxon>Clostridia</taxon>
        <taxon>Eubacteriales</taxon>
        <taxon>Clostridiaceae</taxon>
        <taxon>Clostridium</taxon>
    </lineage>
</organism>
<accession>C1FMU5</accession>
<gene>
    <name evidence="1" type="primary">rpsC</name>
    <name type="ordered locus">CLM_3942</name>
</gene>
<keyword id="KW-0687">Ribonucleoprotein</keyword>
<keyword id="KW-0689">Ribosomal protein</keyword>
<keyword id="KW-0694">RNA-binding</keyword>
<keyword id="KW-0699">rRNA-binding</keyword>
<reference key="1">
    <citation type="submission" date="2008-10" db="EMBL/GenBank/DDBJ databases">
        <title>Genome sequence of Clostridium botulinum A2 Kyoto.</title>
        <authorList>
            <person name="Shrivastava S."/>
            <person name="Brinkac L.M."/>
            <person name="Brown J.L."/>
            <person name="Bruce D."/>
            <person name="Detter C.C."/>
            <person name="Johnson E.A."/>
            <person name="Munk C.A."/>
            <person name="Smith L.A."/>
            <person name="Smith T.J."/>
            <person name="Sutton G."/>
            <person name="Brettin T.S."/>
        </authorList>
    </citation>
    <scope>NUCLEOTIDE SEQUENCE [LARGE SCALE GENOMIC DNA]</scope>
    <source>
        <strain>Kyoto / Type A2</strain>
    </source>
</reference>
<proteinExistence type="inferred from homology"/>